<gene>
    <name evidence="1" type="primary">murA</name>
    <name type="ordered locus">CKO_04592</name>
</gene>
<proteinExistence type="inferred from homology"/>
<name>MURA_CITK8</name>
<accession>A8AQ80</accession>
<protein>
    <recommendedName>
        <fullName evidence="1">UDP-N-acetylglucosamine 1-carboxyvinyltransferase</fullName>
        <ecNumber evidence="1">2.5.1.7</ecNumber>
    </recommendedName>
    <alternativeName>
        <fullName evidence="1">Enoylpyruvate transferase</fullName>
    </alternativeName>
    <alternativeName>
        <fullName evidence="1">UDP-N-acetylglucosamine enolpyruvyl transferase</fullName>
        <shortName evidence="1">EPT</shortName>
    </alternativeName>
</protein>
<organism>
    <name type="scientific">Citrobacter koseri (strain ATCC BAA-895 / CDC 4225-83 / SGSC4696)</name>
    <dbReference type="NCBI Taxonomy" id="290338"/>
    <lineage>
        <taxon>Bacteria</taxon>
        <taxon>Pseudomonadati</taxon>
        <taxon>Pseudomonadota</taxon>
        <taxon>Gammaproteobacteria</taxon>
        <taxon>Enterobacterales</taxon>
        <taxon>Enterobacteriaceae</taxon>
        <taxon>Citrobacter</taxon>
    </lineage>
</organism>
<comment type="function">
    <text evidence="1">Cell wall formation. Adds enolpyruvyl to UDP-N-acetylglucosamine.</text>
</comment>
<comment type="catalytic activity">
    <reaction evidence="1">
        <text>phosphoenolpyruvate + UDP-N-acetyl-alpha-D-glucosamine = UDP-N-acetyl-3-O-(1-carboxyvinyl)-alpha-D-glucosamine + phosphate</text>
        <dbReference type="Rhea" id="RHEA:18681"/>
        <dbReference type="ChEBI" id="CHEBI:43474"/>
        <dbReference type="ChEBI" id="CHEBI:57705"/>
        <dbReference type="ChEBI" id="CHEBI:58702"/>
        <dbReference type="ChEBI" id="CHEBI:68483"/>
        <dbReference type="EC" id="2.5.1.7"/>
    </reaction>
</comment>
<comment type="pathway">
    <text evidence="1">Cell wall biogenesis; peptidoglycan biosynthesis.</text>
</comment>
<comment type="subcellular location">
    <subcellularLocation>
        <location evidence="1">Cytoplasm</location>
    </subcellularLocation>
</comment>
<comment type="similarity">
    <text evidence="1">Belongs to the EPSP synthase family. MurA subfamily.</text>
</comment>
<evidence type="ECO:0000255" key="1">
    <source>
        <dbReference type="HAMAP-Rule" id="MF_00111"/>
    </source>
</evidence>
<dbReference type="EC" id="2.5.1.7" evidence="1"/>
<dbReference type="EMBL" id="CP000822">
    <property type="protein sequence ID" value="ABV15643.1"/>
    <property type="molecule type" value="Genomic_DNA"/>
</dbReference>
<dbReference type="RefSeq" id="WP_012135322.1">
    <property type="nucleotide sequence ID" value="NC_009792.1"/>
</dbReference>
<dbReference type="SMR" id="A8AQ80"/>
<dbReference type="STRING" id="290338.CKO_04592"/>
<dbReference type="GeneID" id="45138132"/>
<dbReference type="KEGG" id="cko:CKO_04592"/>
<dbReference type="HOGENOM" id="CLU_027387_0_0_6"/>
<dbReference type="OrthoDB" id="9803760at2"/>
<dbReference type="UniPathway" id="UPA00219"/>
<dbReference type="Proteomes" id="UP000008148">
    <property type="component" value="Chromosome"/>
</dbReference>
<dbReference type="GO" id="GO:0005737">
    <property type="term" value="C:cytoplasm"/>
    <property type="evidence" value="ECO:0007669"/>
    <property type="project" value="UniProtKB-SubCell"/>
</dbReference>
<dbReference type="GO" id="GO:0008760">
    <property type="term" value="F:UDP-N-acetylglucosamine 1-carboxyvinyltransferase activity"/>
    <property type="evidence" value="ECO:0007669"/>
    <property type="project" value="UniProtKB-UniRule"/>
</dbReference>
<dbReference type="GO" id="GO:0051301">
    <property type="term" value="P:cell division"/>
    <property type="evidence" value="ECO:0007669"/>
    <property type="project" value="UniProtKB-KW"/>
</dbReference>
<dbReference type="GO" id="GO:0071555">
    <property type="term" value="P:cell wall organization"/>
    <property type="evidence" value="ECO:0007669"/>
    <property type="project" value="UniProtKB-KW"/>
</dbReference>
<dbReference type="GO" id="GO:0009252">
    <property type="term" value="P:peptidoglycan biosynthetic process"/>
    <property type="evidence" value="ECO:0007669"/>
    <property type="project" value="UniProtKB-UniRule"/>
</dbReference>
<dbReference type="GO" id="GO:0008360">
    <property type="term" value="P:regulation of cell shape"/>
    <property type="evidence" value="ECO:0007669"/>
    <property type="project" value="UniProtKB-KW"/>
</dbReference>
<dbReference type="GO" id="GO:0019277">
    <property type="term" value="P:UDP-N-acetylgalactosamine biosynthetic process"/>
    <property type="evidence" value="ECO:0007669"/>
    <property type="project" value="InterPro"/>
</dbReference>
<dbReference type="CDD" id="cd01555">
    <property type="entry name" value="UdpNAET"/>
    <property type="match status" value="1"/>
</dbReference>
<dbReference type="FunFam" id="3.65.10.10:FF:000002">
    <property type="entry name" value="UDP-N-acetylglucosamine 1-carboxyvinyltransferase"/>
    <property type="match status" value="1"/>
</dbReference>
<dbReference type="Gene3D" id="3.65.10.10">
    <property type="entry name" value="Enolpyruvate transferase domain"/>
    <property type="match status" value="2"/>
</dbReference>
<dbReference type="HAMAP" id="MF_00111">
    <property type="entry name" value="MurA"/>
    <property type="match status" value="1"/>
</dbReference>
<dbReference type="InterPro" id="IPR001986">
    <property type="entry name" value="Enolpyruvate_Tfrase_dom"/>
</dbReference>
<dbReference type="InterPro" id="IPR036968">
    <property type="entry name" value="Enolpyruvate_Tfrase_sf"/>
</dbReference>
<dbReference type="InterPro" id="IPR050068">
    <property type="entry name" value="MurA_subfamily"/>
</dbReference>
<dbReference type="InterPro" id="IPR013792">
    <property type="entry name" value="RNA3'P_cycl/enolpyr_Trfase_a/b"/>
</dbReference>
<dbReference type="InterPro" id="IPR005750">
    <property type="entry name" value="UDP_GlcNAc_COvinyl_MurA"/>
</dbReference>
<dbReference type="NCBIfam" id="TIGR01072">
    <property type="entry name" value="murA"/>
    <property type="match status" value="1"/>
</dbReference>
<dbReference type="NCBIfam" id="NF006873">
    <property type="entry name" value="PRK09369.1"/>
    <property type="match status" value="1"/>
</dbReference>
<dbReference type="PANTHER" id="PTHR43783">
    <property type="entry name" value="UDP-N-ACETYLGLUCOSAMINE 1-CARBOXYVINYLTRANSFERASE"/>
    <property type="match status" value="1"/>
</dbReference>
<dbReference type="PANTHER" id="PTHR43783:SF1">
    <property type="entry name" value="UDP-N-ACETYLGLUCOSAMINE 1-CARBOXYVINYLTRANSFERASE"/>
    <property type="match status" value="1"/>
</dbReference>
<dbReference type="Pfam" id="PF00275">
    <property type="entry name" value="EPSP_synthase"/>
    <property type="match status" value="1"/>
</dbReference>
<dbReference type="SUPFAM" id="SSF55205">
    <property type="entry name" value="EPT/RTPC-like"/>
    <property type="match status" value="1"/>
</dbReference>
<feature type="chain" id="PRO_1000023029" description="UDP-N-acetylglucosamine 1-carboxyvinyltransferase">
    <location>
        <begin position="1"/>
        <end position="419"/>
    </location>
</feature>
<feature type="active site" description="Proton donor" evidence="1">
    <location>
        <position position="115"/>
    </location>
</feature>
<feature type="binding site" evidence="1">
    <location>
        <begin position="22"/>
        <end position="23"/>
    </location>
    <ligand>
        <name>phosphoenolpyruvate</name>
        <dbReference type="ChEBI" id="CHEBI:58702"/>
    </ligand>
</feature>
<feature type="binding site" evidence="1">
    <location>
        <position position="91"/>
    </location>
    <ligand>
        <name>UDP-N-acetyl-alpha-D-glucosamine</name>
        <dbReference type="ChEBI" id="CHEBI:57705"/>
    </ligand>
</feature>
<feature type="binding site" evidence="1">
    <location>
        <begin position="120"/>
        <end position="124"/>
    </location>
    <ligand>
        <name>UDP-N-acetyl-alpha-D-glucosamine</name>
        <dbReference type="ChEBI" id="CHEBI:57705"/>
    </ligand>
</feature>
<feature type="binding site" evidence="1">
    <location>
        <begin position="160"/>
        <end position="163"/>
    </location>
    <ligand>
        <name>UDP-N-acetyl-alpha-D-glucosamine</name>
        <dbReference type="ChEBI" id="CHEBI:57705"/>
    </ligand>
</feature>
<feature type="binding site" evidence="1">
    <location>
        <position position="305"/>
    </location>
    <ligand>
        <name>UDP-N-acetyl-alpha-D-glucosamine</name>
        <dbReference type="ChEBI" id="CHEBI:57705"/>
    </ligand>
</feature>
<feature type="binding site" evidence="1">
    <location>
        <position position="327"/>
    </location>
    <ligand>
        <name>UDP-N-acetyl-alpha-D-glucosamine</name>
        <dbReference type="ChEBI" id="CHEBI:57705"/>
    </ligand>
</feature>
<feature type="modified residue" description="2-(S-cysteinyl)pyruvic acid O-phosphothioketal" evidence="1">
    <location>
        <position position="115"/>
    </location>
</feature>
<sequence length="419" mass="44782">MDKFRVQGPTTLQGEVTISGAKNAALPILFAALLAEEPVEIQNVPKLKDIDTTMKLLSQLGTKVERNGSVWIDASQVNIFCAPYELVKTMRASIWALGPLVARFGQGQVSLPGGCAIGARPVDLHITGLEQLGAEIKLEEGYVKASVNGRLKGAHIVMDKVSVGATVTIMSAATLAEGTTVIENAAREPEIVDTANFLVTLGAKISGQGTDRITIEGVERLGGGVYRVLPDRIETGTFLVAAAISGGKIVCRNAQPDTLDAVLAKLRDAGADIETGEDWISLDMHGQRPKAVNVRTAPHPAFPTDMQAQFTLLNLVAEGTGFITETIFENRFMHVPELIRMGAHAEIESNTVICHGVEKLSGAQVMATDLRASASLVLAGCIAEGTTLVDRIYHIDRGYERIEDKLRALGANIERVKGE</sequence>
<reference key="1">
    <citation type="submission" date="2007-08" db="EMBL/GenBank/DDBJ databases">
        <authorList>
            <consortium name="The Citrobacter koseri Genome Sequencing Project"/>
            <person name="McClelland M."/>
            <person name="Sanderson E.K."/>
            <person name="Porwollik S."/>
            <person name="Spieth J."/>
            <person name="Clifton W.S."/>
            <person name="Latreille P."/>
            <person name="Courtney L."/>
            <person name="Wang C."/>
            <person name="Pepin K."/>
            <person name="Bhonagiri V."/>
            <person name="Nash W."/>
            <person name="Johnson M."/>
            <person name="Thiruvilangam P."/>
            <person name="Wilson R."/>
        </authorList>
    </citation>
    <scope>NUCLEOTIDE SEQUENCE [LARGE SCALE GENOMIC DNA]</scope>
    <source>
        <strain>ATCC BAA-895 / CDC 4225-83 / SGSC4696</strain>
    </source>
</reference>
<keyword id="KW-0131">Cell cycle</keyword>
<keyword id="KW-0132">Cell division</keyword>
<keyword id="KW-0133">Cell shape</keyword>
<keyword id="KW-0961">Cell wall biogenesis/degradation</keyword>
<keyword id="KW-0963">Cytoplasm</keyword>
<keyword id="KW-0573">Peptidoglycan synthesis</keyword>
<keyword id="KW-0670">Pyruvate</keyword>
<keyword id="KW-1185">Reference proteome</keyword>
<keyword id="KW-0808">Transferase</keyword>